<name>NRDR_MYCVP</name>
<comment type="function">
    <text evidence="1">Negatively regulates transcription of bacterial ribonucleotide reductase nrd genes and operons by binding to NrdR-boxes.</text>
</comment>
<comment type="cofactor">
    <cofactor evidence="1">
        <name>Zn(2+)</name>
        <dbReference type="ChEBI" id="CHEBI:29105"/>
    </cofactor>
    <text evidence="1">Binds 1 zinc ion.</text>
</comment>
<comment type="similarity">
    <text evidence="1">Belongs to the NrdR family.</text>
</comment>
<feature type="chain" id="PRO_1000080783" description="Transcriptional repressor NrdR">
    <location>
        <begin position="1"/>
        <end position="154"/>
    </location>
</feature>
<feature type="domain" description="ATP-cone" evidence="1">
    <location>
        <begin position="46"/>
        <end position="136"/>
    </location>
</feature>
<feature type="zinc finger region" evidence="1">
    <location>
        <begin position="3"/>
        <end position="34"/>
    </location>
</feature>
<evidence type="ECO:0000255" key="1">
    <source>
        <dbReference type="HAMAP-Rule" id="MF_00440"/>
    </source>
</evidence>
<keyword id="KW-0067">ATP-binding</keyword>
<keyword id="KW-0238">DNA-binding</keyword>
<keyword id="KW-0479">Metal-binding</keyword>
<keyword id="KW-0547">Nucleotide-binding</keyword>
<keyword id="KW-0678">Repressor</keyword>
<keyword id="KW-0804">Transcription</keyword>
<keyword id="KW-0805">Transcription regulation</keyword>
<keyword id="KW-0862">Zinc</keyword>
<keyword id="KW-0863">Zinc-finger</keyword>
<reference key="1">
    <citation type="submission" date="2006-12" db="EMBL/GenBank/DDBJ databases">
        <title>Complete sequence of Mycobacterium vanbaalenii PYR-1.</title>
        <authorList>
            <consortium name="US DOE Joint Genome Institute"/>
            <person name="Copeland A."/>
            <person name="Lucas S."/>
            <person name="Lapidus A."/>
            <person name="Barry K."/>
            <person name="Detter J.C."/>
            <person name="Glavina del Rio T."/>
            <person name="Hammon N."/>
            <person name="Israni S."/>
            <person name="Dalin E."/>
            <person name="Tice H."/>
            <person name="Pitluck S."/>
            <person name="Singan V."/>
            <person name="Schmutz J."/>
            <person name="Larimer F."/>
            <person name="Land M."/>
            <person name="Hauser L."/>
            <person name="Kyrpides N."/>
            <person name="Anderson I.J."/>
            <person name="Miller C."/>
            <person name="Richardson P."/>
        </authorList>
    </citation>
    <scope>NUCLEOTIDE SEQUENCE [LARGE SCALE GENOMIC DNA]</scope>
    <source>
        <strain>DSM 7251 / JCM 13017 / BCRC 16820 / KCTC 9966 / NRRL B-24157 / PYR-1</strain>
    </source>
</reference>
<organism>
    <name type="scientific">Mycolicibacterium vanbaalenii (strain DSM 7251 / JCM 13017 / BCRC 16820 / KCTC 9966 / NRRL B-24157 / PYR-1)</name>
    <name type="common">Mycobacterium vanbaalenii</name>
    <dbReference type="NCBI Taxonomy" id="350058"/>
    <lineage>
        <taxon>Bacteria</taxon>
        <taxon>Bacillati</taxon>
        <taxon>Actinomycetota</taxon>
        <taxon>Actinomycetes</taxon>
        <taxon>Mycobacteriales</taxon>
        <taxon>Mycobacteriaceae</taxon>
        <taxon>Mycolicibacterium</taxon>
    </lineage>
</organism>
<dbReference type="EMBL" id="CP000511">
    <property type="protein sequence ID" value="ABM13256.1"/>
    <property type="molecule type" value="Genomic_DNA"/>
</dbReference>
<dbReference type="RefSeq" id="WP_011779668.1">
    <property type="nucleotide sequence ID" value="NZ_JACKSD010000041.1"/>
</dbReference>
<dbReference type="SMR" id="A1T7V6"/>
<dbReference type="STRING" id="350058.Mvan_2443"/>
<dbReference type="KEGG" id="mva:Mvan_2443"/>
<dbReference type="eggNOG" id="COG1327">
    <property type="taxonomic scope" value="Bacteria"/>
</dbReference>
<dbReference type="HOGENOM" id="CLU_108412_1_0_11"/>
<dbReference type="Proteomes" id="UP000009159">
    <property type="component" value="Chromosome"/>
</dbReference>
<dbReference type="GO" id="GO:0005524">
    <property type="term" value="F:ATP binding"/>
    <property type="evidence" value="ECO:0007669"/>
    <property type="project" value="UniProtKB-KW"/>
</dbReference>
<dbReference type="GO" id="GO:0003677">
    <property type="term" value="F:DNA binding"/>
    <property type="evidence" value="ECO:0007669"/>
    <property type="project" value="UniProtKB-KW"/>
</dbReference>
<dbReference type="GO" id="GO:0008270">
    <property type="term" value="F:zinc ion binding"/>
    <property type="evidence" value="ECO:0007669"/>
    <property type="project" value="UniProtKB-UniRule"/>
</dbReference>
<dbReference type="GO" id="GO:0045892">
    <property type="term" value="P:negative regulation of DNA-templated transcription"/>
    <property type="evidence" value="ECO:0007669"/>
    <property type="project" value="UniProtKB-UniRule"/>
</dbReference>
<dbReference type="HAMAP" id="MF_00440">
    <property type="entry name" value="NrdR"/>
    <property type="match status" value="1"/>
</dbReference>
<dbReference type="InterPro" id="IPR005144">
    <property type="entry name" value="ATP-cone_dom"/>
</dbReference>
<dbReference type="InterPro" id="IPR055173">
    <property type="entry name" value="NrdR-like_N"/>
</dbReference>
<dbReference type="InterPro" id="IPR003796">
    <property type="entry name" value="RNR_NrdR-like"/>
</dbReference>
<dbReference type="NCBIfam" id="TIGR00244">
    <property type="entry name" value="transcriptional regulator NrdR"/>
    <property type="match status" value="1"/>
</dbReference>
<dbReference type="PANTHER" id="PTHR30455">
    <property type="entry name" value="TRANSCRIPTIONAL REPRESSOR NRDR"/>
    <property type="match status" value="1"/>
</dbReference>
<dbReference type="PANTHER" id="PTHR30455:SF2">
    <property type="entry name" value="TRANSCRIPTIONAL REPRESSOR NRDR"/>
    <property type="match status" value="1"/>
</dbReference>
<dbReference type="Pfam" id="PF03477">
    <property type="entry name" value="ATP-cone"/>
    <property type="match status" value="1"/>
</dbReference>
<dbReference type="Pfam" id="PF22811">
    <property type="entry name" value="Zn_ribbon_NrdR"/>
    <property type="match status" value="1"/>
</dbReference>
<dbReference type="PROSITE" id="PS51161">
    <property type="entry name" value="ATP_CONE"/>
    <property type="match status" value="1"/>
</dbReference>
<protein>
    <recommendedName>
        <fullName evidence="1">Transcriptional repressor NrdR</fullName>
    </recommendedName>
</protein>
<sequence>MHCPFCRHPDSRVVDSRETDEGQAIRRRRSCPECGRRFTTVETAVLAVVKRSGVTEPFSREKVIRGVRRSCQGRQVDDDALNLLAQQVEDAVRATGSAEVPSHEVGLAILGPLRELDEVAYLRFASVYRSFSSAEDFEREIQALRAHREVPAQS</sequence>
<accession>A1T7V6</accession>
<gene>
    <name evidence="1" type="primary">nrdR</name>
    <name type="ordered locus">Mvan_2443</name>
</gene>
<proteinExistence type="inferred from homology"/>